<sequence length="552" mass="62428">MKGCLATMDKELWIERANDSLVKHFYEQQSDIEQREGFESKLTFGTAGIRGKFGLGEGRLNKFTIEKLALGLARYLNAQTNSPTIVIHYDIRHLSTEFAQIIANVLANHQITVYLPDTYKTTPELSFAVRNLNTTAGIMITASHNPKDYNGIKVYGSDGAQLSTDASELASRYIEEVGDPLQIDIPISKQNTSYIKPFPKSVTDDYMKHIQNMIGYIPKSDLQVVFTSLHGTSVPIVPELLQSLNFNQFNLVEAQCKPDPNFSSVQSANPEDHRAFDQAVELANKSHADLLISTDPDADRLGIAERDAHGHITYFNGNQIGALLLNYRIQQTSQLRHRLMIQSIVSSELTKSLARYNNVEYKEVLTGFKFIAQEIRQLDDHQNMIFAFEESYGFLSEPFVRDKDAVQIVPLIIKYASELKLYGKTLKDELEQIYQTVGRHEDTLFSHTLDGLEGKKKIESIMTHFRSNPPQEIQGLKVKAIEDYLTSEVYHLDKDTTSQINSPKSNVIRVLFDEGFIALRPSGTEPKIKLYVSLKCRNFDDVAQKINAMIFS</sequence>
<dbReference type="EC" id="5.4.2.2"/>
<dbReference type="EMBL" id="BX571857">
    <property type="protein sequence ID" value="CAG44192.1"/>
    <property type="molecule type" value="Genomic_DNA"/>
</dbReference>
<dbReference type="SMR" id="Q6G6I3"/>
<dbReference type="KEGG" id="sas:SAS2378"/>
<dbReference type="HOGENOM" id="CLU_016950_0_0_9"/>
<dbReference type="UniPathway" id="UPA00894"/>
<dbReference type="GO" id="GO:0000287">
    <property type="term" value="F:magnesium ion binding"/>
    <property type="evidence" value="ECO:0007669"/>
    <property type="project" value="InterPro"/>
</dbReference>
<dbReference type="GO" id="GO:0004614">
    <property type="term" value="F:phosphoglucomutase activity"/>
    <property type="evidence" value="ECO:0007669"/>
    <property type="project" value="UniProtKB-EC"/>
</dbReference>
<dbReference type="GO" id="GO:0008973">
    <property type="term" value="F:phosphopentomutase activity"/>
    <property type="evidence" value="ECO:0007669"/>
    <property type="project" value="TreeGrafter"/>
</dbReference>
<dbReference type="GO" id="GO:0009246">
    <property type="term" value="P:enterobacterial common antigen biosynthetic process"/>
    <property type="evidence" value="ECO:0007669"/>
    <property type="project" value="UniProtKB-UniPathway"/>
</dbReference>
<dbReference type="GO" id="GO:0006006">
    <property type="term" value="P:glucose metabolic process"/>
    <property type="evidence" value="ECO:0007669"/>
    <property type="project" value="UniProtKB-KW"/>
</dbReference>
<dbReference type="GO" id="GO:0006166">
    <property type="term" value="P:purine ribonucleoside salvage"/>
    <property type="evidence" value="ECO:0007669"/>
    <property type="project" value="TreeGrafter"/>
</dbReference>
<dbReference type="CDD" id="cd05799">
    <property type="entry name" value="PGM2"/>
    <property type="match status" value="1"/>
</dbReference>
<dbReference type="Gene3D" id="3.40.120.10">
    <property type="entry name" value="Alpha-D-Glucose-1,6-Bisphosphate, subunit A, domain 3"/>
    <property type="match status" value="3"/>
</dbReference>
<dbReference type="Gene3D" id="3.30.310.50">
    <property type="entry name" value="Alpha-D-phosphohexomutase, C-terminal domain"/>
    <property type="match status" value="1"/>
</dbReference>
<dbReference type="InterPro" id="IPR005844">
    <property type="entry name" value="A-D-PHexomutase_a/b/a-I"/>
</dbReference>
<dbReference type="InterPro" id="IPR016055">
    <property type="entry name" value="A-D-PHexomutase_a/b/a-I/II/III"/>
</dbReference>
<dbReference type="InterPro" id="IPR005845">
    <property type="entry name" value="A-D-PHexomutase_a/b/a-II"/>
</dbReference>
<dbReference type="InterPro" id="IPR005846">
    <property type="entry name" value="A-D-PHexomutase_a/b/a-III"/>
</dbReference>
<dbReference type="InterPro" id="IPR005843">
    <property type="entry name" value="A-D-PHexomutase_C"/>
</dbReference>
<dbReference type="InterPro" id="IPR036900">
    <property type="entry name" value="A-D-PHexomutase_C_sf"/>
</dbReference>
<dbReference type="InterPro" id="IPR016066">
    <property type="entry name" value="A-D-PHexomutase_CS"/>
</dbReference>
<dbReference type="InterPro" id="IPR005841">
    <property type="entry name" value="Alpha-D-phosphohexomutase_SF"/>
</dbReference>
<dbReference type="PANTHER" id="PTHR45745:SF1">
    <property type="entry name" value="PHOSPHOGLUCOMUTASE 2B-RELATED"/>
    <property type="match status" value="1"/>
</dbReference>
<dbReference type="PANTHER" id="PTHR45745">
    <property type="entry name" value="PHOSPHOMANNOMUTASE 45A"/>
    <property type="match status" value="1"/>
</dbReference>
<dbReference type="Pfam" id="PF02878">
    <property type="entry name" value="PGM_PMM_I"/>
    <property type="match status" value="1"/>
</dbReference>
<dbReference type="Pfam" id="PF02879">
    <property type="entry name" value="PGM_PMM_II"/>
    <property type="match status" value="1"/>
</dbReference>
<dbReference type="Pfam" id="PF02880">
    <property type="entry name" value="PGM_PMM_III"/>
    <property type="match status" value="1"/>
</dbReference>
<dbReference type="Pfam" id="PF00408">
    <property type="entry name" value="PGM_PMM_IV"/>
    <property type="match status" value="1"/>
</dbReference>
<dbReference type="PRINTS" id="PR00509">
    <property type="entry name" value="PGMPMM"/>
</dbReference>
<dbReference type="SUPFAM" id="SSF55957">
    <property type="entry name" value="Phosphoglucomutase, C-terminal domain"/>
    <property type="match status" value="1"/>
</dbReference>
<dbReference type="SUPFAM" id="SSF53738">
    <property type="entry name" value="Phosphoglucomutase, first 3 domains"/>
    <property type="match status" value="3"/>
</dbReference>
<dbReference type="PROSITE" id="PS00710">
    <property type="entry name" value="PGM_PMM"/>
    <property type="match status" value="1"/>
</dbReference>
<organism>
    <name type="scientific">Staphylococcus aureus (strain MSSA476)</name>
    <dbReference type="NCBI Taxonomy" id="282459"/>
    <lineage>
        <taxon>Bacteria</taxon>
        <taxon>Bacillati</taxon>
        <taxon>Bacillota</taxon>
        <taxon>Bacilli</taxon>
        <taxon>Bacillales</taxon>
        <taxon>Staphylococcaceae</taxon>
        <taxon>Staphylococcus</taxon>
    </lineage>
</organism>
<comment type="function">
    <text evidence="1">Catalyzes the interconversion between glucose-6-phosphate and alpha-glucose-1-phosphate. This is the first step in the biosynthesis of diglucosyl-diacylglycerol (Glc2-DAG), i.e. the predominant glycolipid found in the S.aureus membrane, which is also used as a membrane anchor for lipoteichoic acid (LTA) (By similarity).</text>
</comment>
<comment type="catalytic activity">
    <reaction>
        <text>alpha-D-glucose 1-phosphate = alpha-D-glucose 6-phosphate</text>
        <dbReference type="Rhea" id="RHEA:23536"/>
        <dbReference type="ChEBI" id="CHEBI:58225"/>
        <dbReference type="ChEBI" id="CHEBI:58601"/>
        <dbReference type="EC" id="5.4.2.2"/>
    </reaction>
</comment>
<comment type="cofactor">
    <cofactor evidence="1">
        <name>Mg(2+)</name>
        <dbReference type="ChEBI" id="CHEBI:18420"/>
    </cofactor>
    <text evidence="1">Binds 1 Mg(2+) ion per subunit.</text>
</comment>
<comment type="pathway">
    <text>Glycolipid metabolism; diglucosyl-diacylglycerol biosynthesis.</text>
</comment>
<comment type="similarity">
    <text evidence="2">Belongs to the phosphohexose mutase family.</text>
</comment>
<protein>
    <recommendedName>
        <fullName>Phosphoglucomutase</fullName>
        <shortName>PGM</shortName>
        <ecNumber>5.4.2.2</ecNumber>
    </recommendedName>
    <alternativeName>
        <fullName>Alpha-phosphoglucomutase</fullName>
    </alternativeName>
    <alternativeName>
        <fullName>Glucose phosphomutase</fullName>
    </alternativeName>
</protein>
<keyword id="KW-0119">Carbohydrate metabolism</keyword>
<keyword id="KW-0313">Glucose metabolism</keyword>
<keyword id="KW-0413">Isomerase</keyword>
<keyword id="KW-0460">Magnesium</keyword>
<keyword id="KW-0479">Metal-binding</keyword>
<keyword id="KW-0597">Phosphoprotein</keyword>
<accession>Q6G6I3</accession>
<name>PGCA_STAAS</name>
<proteinExistence type="inferred from homology"/>
<evidence type="ECO:0000250" key="1"/>
<evidence type="ECO:0000305" key="2"/>
<gene>
    <name type="primary">pgcA</name>
    <name type="ordered locus">SAS2378</name>
</gene>
<feature type="chain" id="PRO_0000308343" description="Phosphoglucomutase">
    <location>
        <begin position="1"/>
        <end position="552"/>
    </location>
</feature>
<feature type="active site" description="Phosphoserine intermediate" evidence="1">
    <location>
        <position position="143"/>
    </location>
</feature>
<feature type="binding site" description="via phosphate group" evidence="1">
    <location>
        <position position="143"/>
    </location>
    <ligand>
        <name>Mg(2+)</name>
        <dbReference type="ChEBI" id="CHEBI:18420"/>
    </ligand>
</feature>
<feature type="binding site" evidence="1">
    <location>
        <position position="295"/>
    </location>
    <ligand>
        <name>Mg(2+)</name>
        <dbReference type="ChEBI" id="CHEBI:18420"/>
    </ligand>
</feature>
<feature type="binding site" evidence="1">
    <location>
        <position position="297"/>
    </location>
    <ligand>
        <name>Mg(2+)</name>
        <dbReference type="ChEBI" id="CHEBI:18420"/>
    </ligand>
</feature>
<feature type="binding site" evidence="1">
    <location>
        <position position="299"/>
    </location>
    <ligand>
        <name>Mg(2+)</name>
        <dbReference type="ChEBI" id="CHEBI:18420"/>
    </ligand>
</feature>
<reference key="1">
    <citation type="journal article" date="2004" name="Proc. Natl. Acad. Sci. U.S.A.">
        <title>Complete genomes of two clinical Staphylococcus aureus strains: evidence for the rapid evolution of virulence and drug resistance.</title>
        <authorList>
            <person name="Holden M.T.G."/>
            <person name="Feil E.J."/>
            <person name="Lindsay J.A."/>
            <person name="Peacock S.J."/>
            <person name="Day N.P.J."/>
            <person name="Enright M.C."/>
            <person name="Foster T.J."/>
            <person name="Moore C.E."/>
            <person name="Hurst L."/>
            <person name="Atkin R."/>
            <person name="Barron A."/>
            <person name="Bason N."/>
            <person name="Bentley S.D."/>
            <person name="Chillingworth C."/>
            <person name="Chillingworth T."/>
            <person name="Churcher C."/>
            <person name="Clark L."/>
            <person name="Corton C."/>
            <person name="Cronin A."/>
            <person name="Doggett J."/>
            <person name="Dowd L."/>
            <person name="Feltwell T."/>
            <person name="Hance Z."/>
            <person name="Harris B."/>
            <person name="Hauser H."/>
            <person name="Holroyd S."/>
            <person name="Jagels K."/>
            <person name="James K.D."/>
            <person name="Lennard N."/>
            <person name="Line A."/>
            <person name="Mayes R."/>
            <person name="Moule S."/>
            <person name="Mungall K."/>
            <person name="Ormond D."/>
            <person name="Quail M.A."/>
            <person name="Rabbinowitsch E."/>
            <person name="Rutherford K.M."/>
            <person name="Sanders M."/>
            <person name="Sharp S."/>
            <person name="Simmonds M."/>
            <person name="Stevens K."/>
            <person name="Whitehead S."/>
            <person name="Barrell B.G."/>
            <person name="Spratt B.G."/>
            <person name="Parkhill J."/>
        </authorList>
    </citation>
    <scope>NUCLEOTIDE SEQUENCE [LARGE SCALE GENOMIC DNA]</scope>
    <source>
        <strain>MSSA476</strain>
    </source>
</reference>